<evidence type="ECO:0000250" key="1"/>
<evidence type="ECO:0000250" key="2">
    <source>
        <dbReference type="UniProtKB" id="Q8N608"/>
    </source>
</evidence>
<evidence type="ECO:0000255" key="3"/>
<evidence type="ECO:0000269" key="4">
    <source>
    </source>
</evidence>
<evidence type="ECO:0000269" key="5">
    <source>
    </source>
</evidence>
<evidence type="ECO:0000269" key="6">
    <source>
    </source>
</evidence>
<evidence type="ECO:0000305" key="7"/>
<evidence type="ECO:0007744" key="8">
    <source>
    </source>
</evidence>
<organism>
    <name type="scientific">Rattus norvegicus</name>
    <name type="common">Rat</name>
    <dbReference type="NCBI Taxonomy" id="10116"/>
    <lineage>
        <taxon>Eukaryota</taxon>
        <taxon>Metazoa</taxon>
        <taxon>Chordata</taxon>
        <taxon>Craniata</taxon>
        <taxon>Vertebrata</taxon>
        <taxon>Euteleostomi</taxon>
        <taxon>Mammalia</taxon>
        <taxon>Eutheria</taxon>
        <taxon>Euarchontoglires</taxon>
        <taxon>Glires</taxon>
        <taxon>Rodentia</taxon>
        <taxon>Myomorpha</taxon>
        <taxon>Muroidea</taxon>
        <taxon>Muridae</taxon>
        <taxon>Murinae</taxon>
        <taxon>Rattus</taxon>
    </lineage>
</organism>
<proteinExistence type="evidence at protein level"/>
<accession>Q6Q629</accession>
<protein>
    <recommendedName>
        <fullName>Inactive dipeptidyl peptidase 10</fullName>
    </recommendedName>
    <alternativeName>
        <fullName>Dipeptidyl peptidase X</fullName>
        <shortName>DPP X</shortName>
    </alternativeName>
    <alternativeName>
        <fullName>Kv4 potassium channel auxiliary subunit</fullName>
    </alternativeName>
</protein>
<comment type="function">
    <text evidence="2 5 6 7">Promotes cell surface expression of the potassium channel KCND2. Modulates the activity and gating characteristics of the potassium channel KCND2 (PubMed:16123112, PubMed:19901547). Has no dipeptidyl aminopeptidase activity (Probable).</text>
</comment>
<comment type="subunit">
    <text evidence="2 4 5">May form oligomers. Interacts with KCND1 (By similarity). Interacts with KCND2 (PubMed:15671030, PubMed:16123112). Identified in a complex with KCND2 and KCNIP3 (PubMed:16123112).</text>
</comment>
<comment type="subcellular location">
    <subcellularLocation>
        <location evidence="5">Cell membrane</location>
        <topology evidence="7">Single-pass type II membrane protein</topology>
    </subcellularLocation>
</comment>
<comment type="tissue specificity">
    <text evidence="5">Detected in brain cortex, hippocampus, thalamus and cerebellum Purkinje cells (at protein level) (PubMed:16123112).</text>
</comment>
<comment type="PTM">
    <text evidence="2">N-glycosylation is important for cell surface expression, specially at Asn-257, which is crucial.</text>
</comment>
<comment type="similarity">
    <text evidence="7">Belongs to the peptidase S9B family. DPPIV subfamily.</text>
</comment>
<comment type="caution">
    <text evidence="7">Gly-651 is present instead of the conserved Ser which is expected to be an active site residue suggesting that this protein has no peptidase activity.</text>
</comment>
<gene>
    <name type="primary">Dpp10</name>
</gene>
<feature type="chain" id="PRO_0000122419" description="Inactive dipeptidyl peptidase 10">
    <location>
        <begin position="1"/>
        <end position="796"/>
    </location>
</feature>
<feature type="topological domain" description="Cytoplasmic" evidence="3">
    <location>
        <begin position="1"/>
        <end position="34"/>
    </location>
</feature>
<feature type="transmembrane region" description="Helical; Signal-anchor for type II membrane protein" evidence="3">
    <location>
        <begin position="35"/>
        <end position="55"/>
    </location>
</feature>
<feature type="topological domain" description="Extracellular" evidence="3">
    <location>
        <begin position="56"/>
        <end position="796"/>
    </location>
</feature>
<feature type="region of interest" description="Mediates effects on KCND2" evidence="1">
    <location>
        <begin position="1"/>
        <end position="55"/>
    </location>
</feature>
<feature type="modified residue" description="Phosphotyrosine" evidence="2">
    <location>
        <position position="138"/>
    </location>
</feature>
<feature type="modified residue" description="Phosphotyrosine" evidence="2">
    <location>
        <position position="143"/>
    </location>
</feature>
<feature type="glycosylation site" description="N-linked (GlcNAc...) asparagine" evidence="3">
    <location>
        <position position="63"/>
    </location>
</feature>
<feature type="glycosylation site" description="N-linked (GlcNAc...) asparagine" evidence="3">
    <location>
        <position position="90"/>
    </location>
</feature>
<feature type="glycosylation site" description="N-linked (GlcNAc...) asparagine" evidence="3">
    <location>
        <position position="111"/>
    </location>
</feature>
<feature type="glycosylation site" description="N-linked (GlcNAc...) asparagine" evidence="3">
    <location>
        <position position="119"/>
    </location>
</feature>
<feature type="glycosylation site" description="N-linked (GlcNAc...) asparagine" evidence="3">
    <location>
        <position position="257"/>
    </location>
</feature>
<feature type="glycosylation site" description="N-linked (GlcNAc...) asparagine" evidence="3">
    <location>
        <position position="342"/>
    </location>
</feature>
<feature type="glycosylation site" description="N-linked (GlcNAc...) asparagine" evidence="8">
    <location>
        <position position="748"/>
    </location>
</feature>
<dbReference type="EMBL" id="AY557199">
    <property type="protein sequence ID" value="AAS64749.1"/>
    <property type="molecule type" value="mRNA"/>
</dbReference>
<dbReference type="RefSeq" id="NP_001012205.1">
    <property type="nucleotide sequence ID" value="NM_001012205.2"/>
</dbReference>
<dbReference type="SMR" id="Q6Q629"/>
<dbReference type="CORUM" id="Q6Q629"/>
<dbReference type="FunCoup" id="Q6Q629">
    <property type="interactions" value="603"/>
</dbReference>
<dbReference type="STRING" id="10116.ENSRNOP00000003527"/>
<dbReference type="ESTHER" id="ratno-q6q629">
    <property type="family name" value="DPP4N_Peptidase_S9"/>
</dbReference>
<dbReference type="MEROPS" id="S09.974"/>
<dbReference type="GlyCosmos" id="Q6Q629">
    <property type="glycosylation" value="7 sites, 4 glycans"/>
</dbReference>
<dbReference type="GlyGen" id="Q6Q629">
    <property type="glycosylation" value="7 sites, 4 N-linked glycans (2 sites), 2 N-linked;o-linked glycans (1 site)"/>
</dbReference>
<dbReference type="iPTMnet" id="Q6Q629"/>
<dbReference type="PhosphoSitePlus" id="Q6Q629"/>
<dbReference type="PaxDb" id="10116-ENSRNOP00000003527"/>
<dbReference type="Ensembl" id="ENSRNOT00000112799.1">
    <property type="protein sequence ID" value="ENSRNOP00000083925.1"/>
    <property type="gene ID" value="ENSRNOG00000002595.6"/>
</dbReference>
<dbReference type="GeneID" id="363972"/>
<dbReference type="KEGG" id="rno:363972"/>
<dbReference type="UCSC" id="RGD:1306427">
    <property type="organism name" value="rat"/>
</dbReference>
<dbReference type="AGR" id="RGD:1306427"/>
<dbReference type="CTD" id="57628"/>
<dbReference type="RGD" id="1306427">
    <property type="gene designation" value="Dpp10"/>
</dbReference>
<dbReference type="eggNOG" id="KOG2100">
    <property type="taxonomic scope" value="Eukaryota"/>
</dbReference>
<dbReference type="GeneTree" id="ENSGT00940000154657"/>
<dbReference type="InParanoid" id="Q6Q629"/>
<dbReference type="OMA" id="YTSTEHH"/>
<dbReference type="PRO" id="PR:Q6Q629"/>
<dbReference type="Proteomes" id="UP000002494">
    <property type="component" value="Chromosome 13"/>
</dbReference>
<dbReference type="GO" id="GO:0016020">
    <property type="term" value="C:membrane"/>
    <property type="evidence" value="ECO:0000266"/>
    <property type="project" value="RGD"/>
</dbReference>
<dbReference type="GO" id="GO:0005886">
    <property type="term" value="C:plasma membrane"/>
    <property type="evidence" value="ECO:0000250"/>
    <property type="project" value="UniProtKB"/>
</dbReference>
<dbReference type="GO" id="GO:0008076">
    <property type="term" value="C:voltage-gated potassium channel complex"/>
    <property type="evidence" value="ECO:0000266"/>
    <property type="project" value="RGD"/>
</dbReference>
<dbReference type="GO" id="GO:0015459">
    <property type="term" value="F:potassium channel regulator activity"/>
    <property type="evidence" value="ECO:0000250"/>
    <property type="project" value="UniProtKB"/>
</dbReference>
<dbReference type="GO" id="GO:0008236">
    <property type="term" value="F:serine-type peptidase activity"/>
    <property type="evidence" value="ECO:0007669"/>
    <property type="project" value="InterPro"/>
</dbReference>
<dbReference type="GO" id="GO:0044325">
    <property type="term" value="F:transmembrane transporter binding"/>
    <property type="evidence" value="ECO:0000266"/>
    <property type="project" value="RGD"/>
</dbReference>
<dbReference type="GO" id="GO:1903078">
    <property type="term" value="P:positive regulation of protein localization to plasma membrane"/>
    <property type="evidence" value="ECO:0000266"/>
    <property type="project" value="RGD"/>
</dbReference>
<dbReference type="GO" id="GO:0072659">
    <property type="term" value="P:protein localization to plasma membrane"/>
    <property type="evidence" value="ECO:0000250"/>
    <property type="project" value="UniProtKB"/>
</dbReference>
<dbReference type="GO" id="GO:0006508">
    <property type="term" value="P:proteolysis"/>
    <property type="evidence" value="ECO:0007669"/>
    <property type="project" value="InterPro"/>
</dbReference>
<dbReference type="GO" id="GO:1901379">
    <property type="term" value="P:regulation of potassium ion transmembrane transport"/>
    <property type="evidence" value="ECO:0000250"/>
    <property type="project" value="UniProtKB"/>
</dbReference>
<dbReference type="FunFam" id="2.140.10.30:FF:000001">
    <property type="entry name" value="Dipeptidyl peptidase 4"/>
    <property type="match status" value="1"/>
</dbReference>
<dbReference type="FunFam" id="3.40.50.1820:FF:000003">
    <property type="entry name" value="Dipeptidyl peptidase 4"/>
    <property type="match status" value="1"/>
</dbReference>
<dbReference type="Gene3D" id="3.40.50.1820">
    <property type="entry name" value="alpha/beta hydrolase"/>
    <property type="match status" value="1"/>
</dbReference>
<dbReference type="Gene3D" id="2.140.10.30">
    <property type="entry name" value="Dipeptidylpeptidase IV, N-terminal domain"/>
    <property type="match status" value="1"/>
</dbReference>
<dbReference type="InterPro" id="IPR029058">
    <property type="entry name" value="AB_hydrolase_fold"/>
</dbReference>
<dbReference type="InterPro" id="IPR001375">
    <property type="entry name" value="Peptidase_S9_cat"/>
</dbReference>
<dbReference type="InterPro" id="IPR002469">
    <property type="entry name" value="Peptidase_S9B_N"/>
</dbReference>
<dbReference type="InterPro" id="IPR050278">
    <property type="entry name" value="Serine_Prot_S9B/DPPIV"/>
</dbReference>
<dbReference type="PANTHER" id="PTHR11731:SF21">
    <property type="entry name" value="INACTIVE DIPEPTIDYL PEPTIDASE 10"/>
    <property type="match status" value="1"/>
</dbReference>
<dbReference type="PANTHER" id="PTHR11731">
    <property type="entry name" value="PROTEASE FAMILY S9B,C DIPEPTIDYL-PEPTIDASE IV-RELATED"/>
    <property type="match status" value="1"/>
</dbReference>
<dbReference type="Pfam" id="PF00930">
    <property type="entry name" value="DPPIV_N"/>
    <property type="match status" value="1"/>
</dbReference>
<dbReference type="Pfam" id="PF00326">
    <property type="entry name" value="Peptidase_S9"/>
    <property type="match status" value="1"/>
</dbReference>
<dbReference type="SUPFAM" id="SSF53474">
    <property type="entry name" value="alpha/beta-Hydrolases"/>
    <property type="match status" value="1"/>
</dbReference>
<dbReference type="SUPFAM" id="SSF82171">
    <property type="entry name" value="DPP6 N-terminal domain-like"/>
    <property type="match status" value="1"/>
</dbReference>
<reference key="1">
    <citation type="submission" date="2004-02" db="EMBL/GenBank/DDBJ databases">
        <title>A DPPX homolog is highly expressed in peripheral neurons and regulates Kv4 channel expression and gating.</title>
        <authorList>
            <person name="Ren X."/>
            <person name="Hayashi Y."/>
            <person name="Yoshimura N."/>
            <person name="Takimoto K."/>
        </authorList>
    </citation>
    <scope>NUCLEOTIDE SEQUENCE [MRNA]</scope>
    <source>
        <strain>Sprague-Dawley</strain>
    </source>
</reference>
<reference key="2">
    <citation type="journal article" date="2005" name="J. Biol. Chem.">
        <title>DPP10 modulates Kv4-mediated A-type potassium channels.</title>
        <authorList>
            <person name="Zagha E."/>
            <person name="Ozaita A."/>
            <person name="Chang S.Y."/>
            <person name="Nadal M.S."/>
            <person name="Lin U."/>
            <person name="Saganich M.J."/>
            <person name="McCormack T."/>
            <person name="Akinsanya K.O."/>
            <person name="Qi S.Y."/>
            <person name="Rudy B."/>
        </authorList>
    </citation>
    <scope>INTERACTION WITH KCND2</scope>
    <scope>IDENTIFICATION BY MASS SPECTROMETRY</scope>
</reference>
<reference key="3">
    <citation type="journal article" date="2005" name="J. Physiol. (Lond.)">
        <title>Multiprotein assembly of Kv4.2, KChIP3 and DPP10 produces ternary channel complexes with ISA-like properties.</title>
        <authorList>
            <person name="Jerng H.H."/>
            <person name="Kunjilwar K."/>
            <person name="Pfaffinger P.J."/>
        </authorList>
    </citation>
    <scope>FUNCTION</scope>
    <scope>SUBCELLULAR LOCATION</scope>
    <scope>INTERACTION WITH KCND2 AND KCNIP3</scope>
    <scope>TISSUE SPECIFICITY</scope>
</reference>
<reference key="4">
    <citation type="journal article" date="2009" name="Channels">
        <title>A novel N-terminal motif of dipeptidyl peptidase-like proteins produces rapid inactivation of KV4.2 channels by a pore-blocking mechanism.</title>
        <authorList>
            <person name="Jerng H.H."/>
            <person name="Dougherty K."/>
            <person name="Covarrubias M."/>
            <person name="Pfaffinger P.J."/>
        </authorList>
    </citation>
    <scope>FUNCTION</scope>
</reference>
<reference key="5">
    <citation type="journal article" date="2013" name="J. Proteome Res.">
        <title>Site-specific glycan-peptide analysis for determination of N-glycoproteome heterogeneity.</title>
        <authorList>
            <person name="Parker B.L."/>
            <person name="Thaysen-Andersen M."/>
            <person name="Solis N."/>
            <person name="Scott N.E."/>
            <person name="Larsen M.R."/>
            <person name="Graham M.E."/>
            <person name="Packer N.H."/>
            <person name="Cordwell S.J."/>
        </authorList>
    </citation>
    <scope>GLYCOSYLATION [LARGE SCALE ANALYSIS] AT ASN-748</scope>
    <scope>IDENTIFICATION BY MASS SPECTROMETRY [LARGE SCALE ANALYSIS]</scope>
    <source>
        <tissue>Brain</tissue>
    </source>
</reference>
<name>DPP10_RAT</name>
<sequence>MNQTASVSHHIKCQPSKTIKELGSNSPPQRNWKGIAIALLVILVVCSLITMSVILLTPDELTNSSETRLSLEELLGKGFGLHNPEARWINDTDVVYKTDNGHVMKLNAETNATTLLLDNSTFVTFKASRHSLSPDLKYVLLAYDVKQIFHYSFTASYLIYNIHTGEVWELNPPEVEDSVLQYAAWGVQGQQLIYIFENNIYYQPDIKSSSLRLTSSGKEGIVFNGIADWLYEEELLHSHIAHWWSPDGERLAFLMINDSLVPNMVIPRFTGALYPKAKQYPYPKAGQANPSVKLYVVNLYGPTHTLELMPPDIFKSREYYITMVKWVSNTRTVVRWLNRPQNISILTVCESTTGACSRKYEMTSDTWISKQNEEPVFSRDGSKFFMTVPVKQGGRGEFHHIAMFLVQSKSEQITVRHLTSGNWEVIRILAYDETTQKIYFLSTEFSPRGRQLYSASTEGLLSRDCISCNFRKEDCTYFDASFSPMNQHFLLFCEGPKVPMVSLHSTDNPSNYYILERNSMMKETIQKKKLAKREIRILHIDDYELPLQLSFPKDFLEKNQYALLLIIDEEPGGQMVTEKFHVDWDSVLIDTDNVIVARFDGRGSGFQGLKVLQEIHRRTGSVEAKDQIAAIKYLLKQPYIDSKRLSIFGKGYGGYIASMILKSDEKFFKCGTVVAPISDMKLYASAFSERYLGMPSKEESTYQASSVLHNIHGLKEENLLIIHGTADTKVHFQHSAELIKHLIKAGVNYTLQVYPDEGYHISDKSKHHFYSTILRFFSDCLKEEVSVLPQEPEEDE</sequence>
<keyword id="KW-1003">Cell membrane</keyword>
<keyword id="KW-0325">Glycoprotein</keyword>
<keyword id="KW-0472">Membrane</keyword>
<keyword id="KW-0597">Phosphoprotein</keyword>
<keyword id="KW-1185">Reference proteome</keyword>
<keyword id="KW-0735">Signal-anchor</keyword>
<keyword id="KW-0812">Transmembrane</keyword>
<keyword id="KW-1133">Transmembrane helix</keyword>